<feature type="chain" id="PRO_1000126774" description="Large ribosomal subunit protein bL31B">
    <location>
        <begin position="1"/>
        <end position="84"/>
    </location>
</feature>
<gene>
    <name evidence="1" type="primary">rpmE2</name>
    <name type="ordered locus">ABBFA_003147</name>
</gene>
<reference key="1">
    <citation type="journal article" date="2008" name="J. Bacteriol.">
        <title>Comparative genome sequence analysis of multidrug-resistant Acinetobacter baumannii.</title>
        <authorList>
            <person name="Adams M.D."/>
            <person name="Goglin K."/>
            <person name="Molyneaux N."/>
            <person name="Hujer K.M."/>
            <person name="Lavender H."/>
            <person name="Jamison J.J."/>
            <person name="MacDonald I.J."/>
            <person name="Martin K.M."/>
            <person name="Russo T."/>
            <person name="Campagnari A.A."/>
            <person name="Hujer A.M."/>
            <person name="Bonomo R.A."/>
            <person name="Gill S.R."/>
        </authorList>
    </citation>
    <scope>NUCLEOTIDE SEQUENCE [LARGE SCALE GENOMIC DNA]</scope>
    <source>
        <strain>AB307-0294</strain>
    </source>
</reference>
<name>RL31B_ACIB3</name>
<keyword id="KW-0687">Ribonucleoprotein</keyword>
<keyword id="KW-0689">Ribosomal protein</keyword>
<proteinExistence type="inferred from homology"/>
<dbReference type="EMBL" id="CP001172">
    <property type="protein sequence ID" value="ACJ56317.1"/>
    <property type="molecule type" value="Genomic_DNA"/>
</dbReference>
<dbReference type="RefSeq" id="WP_001224256.1">
    <property type="nucleotide sequence ID" value="NZ_CP001172.1"/>
</dbReference>
<dbReference type="SMR" id="B7H0W3"/>
<dbReference type="HOGENOM" id="CLU_114306_2_1_6"/>
<dbReference type="Proteomes" id="UP000006924">
    <property type="component" value="Chromosome"/>
</dbReference>
<dbReference type="GO" id="GO:1990904">
    <property type="term" value="C:ribonucleoprotein complex"/>
    <property type="evidence" value="ECO:0007669"/>
    <property type="project" value="UniProtKB-KW"/>
</dbReference>
<dbReference type="GO" id="GO:0005840">
    <property type="term" value="C:ribosome"/>
    <property type="evidence" value="ECO:0007669"/>
    <property type="project" value="UniProtKB-KW"/>
</dbReference>
<dbReference type="GO" id="GO:0003735">
    <property type="term" value="F:structural constituent of ribosome"/>
    <property type="evidence" value="ECO:0007669"/>
    <property type="project" value="InterPro"/>
</dbReference>
<dbReference type="GO" id="GO:0006412">
    <property type="term" value="P:translation"/>
    <property type="evidence" value="ECO:0007669"/>
    <property type="project" value="UniProtKB-UniRule"/>
</dbReference>
<dbReference type="Gene3D" id="4.10.830.30">
    <property type="entry name" value="Ribosomal protein L31"/>
    <property type="match status" value="1"/>
</dbReference>
<dbReference type="HAMAP" id="MF_00502">
    <property type="entry name" value="Ribosomal_bL31_2"/>
    <property type="match status" value="1"/>
</dbReference>
<dbReference type="InterPro" id="IPR034704">
    <property type="entry name" value="Ribosomal_bL28/bL31-like_sf"/>
</dbReference>
<dbReference type="InterPro" id="IPR002150">
    <property type="entry name" value="Ribosomal_bL31"/>
</dbReference>
<dbReference type="InterPro" id="IPR027493">
    <property type="entry name" value="Ribosomal_bL31_B"/>
</dbReference>
<dbReference type="InterPro" id="IPR042105">
    <property type="entry name" value="Ribosomal_bL31_sf"/>
</dbReference>
<dbReference type="NCBIfam" id="TIGR00105">
    <property type="entry name" value="L31"/>
    <property type="match status" value="1"/>
</dbReference>
<dbReference type="NCBIfam" id="NF002462">
    <property type="entry name" value="PRK01678.1"/>
    <property type="match status" value="1"/>
</dbReference>
<dbReference type="PANTHER" id="PTHR33280">
    <property type="entry name" value="50S RIBOSOMAL PROTEIN L31, CHLOROPLASTIC"/>
    <property type="match status" value="1"/>
</dbReference>
<dbReference type="PANTHER" id="PTHR33280:SF1">
    <property type="entry name" value="LARGE RIBOSOMAL SUBUNIT PROTEIN BL31C"/>
    <property type="match status" value="1"/>
</dbReference>
<dbReference type="Pfam" id="PF01197">
    <property type="entry name" value="Ribosomal_L31"/>
    <property type="match status" value="1"/>
</dbReference>
<dbReference type="PRINTS" id="PR01249">
    <property type="entry name" value="RIBOSOMALL31"/>
</dbReference>
<dbReference type="SUPFAM" id="SSF143800">
    <property type="entry name" value="L28p-like"/>
    <property type="match status" value="1"/>
</dbReference>
<dbReference type="PROSITE" id="PS01143">
    <property type="entry name" value="RIBOSOMAL_L31"/>
    <property type="match status" value="1"/>
</dbReference>
<evidence type="ECO:0000255" key="1">
    <source>
        <dbReference type="HAMAP-Rule" id="MF_00502"/>
    </source>
</evidence>
<evidence type="ECO:0000305" key="2"/>
<accession>B7H0W3</accession>
<organism>
    <name type="scientific">Acinetobacter baumannii (strain AB307-0294)</name>
    <dbReference type="NCBI Taxonomy" id="557600"/>
    <lineage>
        <taxon>Bacteria</taxon>
        <taxon>Pseudomonadati</taxon>
        <taxon>Pseudomonadota</taxon>
        <taxon>Gammaproteobacteria</taxon>
        <taxon>Moraxellales</taxon>
        <taxon>Moraxellaceae</taxon>
        <taxon>Acinetobacter</taxon>
        <taxon>Acinetobacter calcoaceticus/baumannii complex</taxon>
    </lineage>
</organism>
<sequence>MRKDIHPAYQQVLFHDTNADVYFLIGSTIQTKQTKEYQGQVYPYVTLDISSASHPFYTGEVRQASNEGRVASFNKRFARFNRKS</sequence>
<protein>
    <recommendedName>
        <fullName evidence="1">Large ribosomal subunit protein bL31B</fullName>
    </recommendedName>
    <alternativeName>
        <fullName evidence="2">50S ribosomal protein L31 type B</fullName>
    </alternativeName>
</protein>
<comment type="subunit">
    <text evidence="1">Part of the 50S ribosomal subunit.</text>
</comment>
<comment type="similarity">
    <text evidence="1">Belongs to the bacterial ribosomal protein bL31 family. Type B subfamily.</text>
</comment>